<organismHost>
    <name type="scientific">Bos taurus</name>
    <name type="common">Bovine</name>
    <dbReference type="NCBI Taxonomy" id="9913"/>
</organismHost>
<name>ETF2_VACCW</name>
<comment type="function">
    <text evidence="2 3">Acts with RNA polymerase to initiate transcription from early gene promoters. Is recruited by the RPO-associated protein of 94 kDa RAP94/OPG109 to form the early transcription complex, which also contains the core RNA polymerase. ETF heterodimer binds to early gene promoters.</text>
</comment>
<comment type="subunit">
    <text evidence="3">Heterodimer of a 70 kDa and a 82 kDa subunit. Part of the early transcription complex composed of ETF, RAP94/OPG109, and the DNA-directed RNA polymerase.</text>
</comment>
<comment type="subcellular location">
    <subcellularLocation>
        <location evidence="4">Virion</location>
    </subcellularLocation>
    <text evidence="1">All the enzymes and other proteins required to synthesize early mRNAs are packaged within the virion core along with the DNA genome. This is necessary because viral early mRNAs are synthesized within minutes after virus entry into the cell and are extruded through pores in the core particle (By similarity).</text>
</comment>
<comment type="similarity">
    <text evidence="5">Belongs to the poxviridae VETF large subunit family.</text>
</comment>
<feature type="chain" id="PRO_0000099082" description="Early transcription factor 82 kDa subunit">
    <location>
        <begin position="1"/>
        <end position="710"/>
    </location>
</feature>
<feature type="sequence conflict" description="In Ref. 2; AAA69587." evidence="5" ref="2">
    <original>TTSDIIQF</original>
    <variation>LHLILFSC</variation>
    <location>
        <begin position="534"/>
        <end position="541"/>
    </location>
</feature>
<dbReference type="EMBL" id="AY243312">
    <property type="protein sequence ID" value="AAO89405.1"/>
    <property type="molecule type" value="Genomic_DNA"/>
</dbReference>
<dbReference type="EMBL" id="M27634">
    <property type="protein sequence ID" value="AAA69587.1"/>
    <property type="molecule type" value="Genomic_DNA"/>
</dbReference>
<dbReference type="EMBL" id="M76473">
    <property type="protein sequence ID" value="AAA48338.1"/>
    <property type="molecule type" value="Genomic_DNA"/>
</dbReference>
<dbReference type="PIR" id="C43497">
    <property type="entry name" value="C43497"/>
</dbReference>
<dbReference type="RefSeq" id="YP_233008.1">
    <property type="nucleotide sequence ID" value="NC_006998.1"/>
</dbReference>
<dbReference type="PDB" id="8C8H">
    <property type="method" value="EM"/>
    <property type="resolution" value="3.84 A"/>
    <property type="chains" value="K=1-710"/>
</dbReference>
<dbReference type="PDBsum" id="8C8H"/>
<dbReference type="EMDB" id="EMD-16476"/>
<dbReference type="SMR" id="P20636"/>
<dbReference type="DNASU" id="3707524"/>
<dbReference type="GeneID" id="3707524"/>
<dbReference type="KEGG" id="vg:3707524"/>
<dbReference type="Proteomes" id="UP000000344">
    <property type="component" value="Genome"/>
</dbReference>
<dbReference type="GO" id="GO:0044423">
    <property type="term" value="C:virion component"/>
    <property type="evidence" value="ECO:0007669"/>
    <property type="project" value="UniProtKB-KW"/>
</dbReference>
<dbReference type="GO" id="GO:0003677">
    <property type="term" value="F:DNA binding"/>
    <property type="evidence" value="ECO:0007669"/>
    <property type="project" value="UniProtKB-KW"/>
</dbReference>
<dbReference type="GO" id="GO:0045893">
    <property type="term" value="P:positive regulation of DNA-templated transcription"/>
    <property type="evidence" value="ECO:0007669"/>
    <property type="project" value="InterPro"/>
</dbReference>
<dbReference type="InterPro" id="IPR007532">
    <property type="entry name" value="Poxvirus_early-TF_lsu"/>
</dbReference>
<dbReference type="Pfam" id="PF04441">
    <property type="entry name" value="Pox_VERT_large"/>
    <property type="match status" value="1"/>
</dbReference>
<proteinExistence type="evidence at protein level"/>
<accession>P20636</accession>
<accession>Q76ZQ7</accession>
<accession>Q85321</accession>
<keyword id="KW-0002">3D-structure</keyword>
<keyword id="KW-0010">Activator</keyword>
<keyword id="KW-0903">Direct protein sequencing</keyword>
<keyword id="KW-0238">DNA-binding</keyword>
<keyword id="KW-0426">Late protein</keyword>
<keyword id="KW-1185">Reference proteome</keyword>
<keyword id="KW-0804">Transcription</keyword>
<keyword id="KW-0805">Transcription regulation</keyword>
<keyword id="KW-0946">Virion</keyword>
<gene>
    <name type="primary">OPG133</name>
    <name type="synonym">VETFL</name>
    <name type="ordered locus">VACWR126</name>
    <name type="ORF">A7L</name>
</gene>
<evidence type="ECO:0000250" key="1"/>
<evidence type="ECO:0000269" key="2">
    <source>
    </source>
</evidence>
<evidence type="ECO:0000269" key="3">
    <source>
    </source>
</evidence>
<evidence type="ECO:0000269" key="4">
    <source>
    </source>
</evidence>
<evidence type="ECO:0000305" key="5"/>
<organism>
    <name type="scientific">Vaccinia virus (strain Western Reserve)</name>
    <name type="common">VACV</name>
    <name type="synonym">Vaccinia virus (strain WR)</name>
    <dbReference type="NCBI Taxonomy" id="10254"/>
    <lineage>
        <taxon>Viruses</taxon>
        <taxon>Varidnaviria</taxon>
        <taxon>Bamfordvirae</taxon>
        <taxon>Nucleocytoviricota</taxon>
        <taxon>Pokkesviricetes</taxon>
        <taxon>Chitovirales</taxon>
        <taxon>Poxviridae</taxon>
        <taxon>Chordopoxvirinae</taxon>
        <taxon>Orthopoxvirus</taxon>
        <taxon>Vaccinia virus</taxon>
    </lineage>
</organism>
<sequence length="710" mass="82273">MRYIVSPQLVLQVGKGQEVERALYLTPYDYIDEKSPIYYFLRSHLNIQQPEIVKRHILLTLRMTQLKGYLGNLLDIKDDIIIYSHKNNLEYSYVDNTIFNPFVYTQKKTLLKNDSFLYNVYPGACDFLVIWVARACDTSIPEFGSYEDVDNNIIKFETMLMEVFPQLDLDITVESKFNNIFRTNLKLTGLKKIIQRVQDLDINYKSLLSRYDEHFINMTGNHFILNDEQLNLSIWDLDGTLALSSDGDTVMINNVKLFTDLVSDIDTQMERIKGDITYKVHLATPINSRIKLDIETSFIFIETATNNILLSSDKKISIILAKNHISIKVKNHIPNIEKYFTFLVIAINAMFNSVQKSADFTKVETVYWSRICQNTKNKNRKPIIINYLDPGMKKISNNFYKSDEKEVFINDNGIMFTCMDPLGKYNKVGFLNIFHDMRKYCIPCCFLHDQSHRSTFSSCVHQIDVEKKIVSPYILNFGKVVTESKMSFLPIIFDAFLNDGMTANMEQDNKRLKETSGYHIVRCCAGDDIVRLRTTSDIIQFVNEDKNILIVNDMVYFPMNASDIGKKIHILIQEIVHEVMIVKKKESSDKIDFFPPNYKLLKDLFPKQTIQTPIQSDAGMVLTTDGFYIDGKLFNEDLSSKYVTFTKNVIASDAVAKYFSPLFKYVISEAKDRFIKTWMINIMIHMNVDPNNIIPTLEKYYPNSGRAQIN</sequence>
<protein>
    <recommendedName>
        <fullName>Early transcription factor 82 kDa subunit</fullName>
    </recommendedName>
    <alternativeName>
        <fullName>ETF large subunit</fullName>
    </alternativeName>
    <alternativeName>
        <fullName>VETF A7 subunit</fullName>
    </alternativeName>
    <alternativeName>
        <fullName>Vaccinia virus early transcription factor large subunit</fullName>
        <shortName>VETF large subunit</shortName>
    </alternativeName>
</protein>
<reference key="1">
    <citation type="submission" date="2003-02" db="EMBL/GenBank/DDBJ databases">
        <title>Sequencing of the coding region of Vaccinia-WR to an average 9-fold redundancy and an error rate of 0.16/10kb.</title>
        <authorList>
            <person name="Esposito J.J."/>
            <person name="Frace A.M."/>
            <person name="Sammons S.A."/>
            <person name="Olsen-Rasmussen M."/>
            <person name="Osborne J."/>
            <person name="Wohlhueter R."/>
        </authorList>
    </citation>
    <scope>NUCLEOTIDE SEQUENCE [LARGE SCALE GENOMIC DNA]</scope>
</reference>
<reference key="2">
    <citation type="journal article" date="1988" name="Arch. Virol.">
        <title>Fine structure of the vaccinia virus gene encoding the precursor of the major core protein 4 a.</title>
        <authorList>
            <person name="van Meir E."/>
            <person name="Wittek R."/>
        </authorList>
    </citation>
    <scope>NUCLEOTIDE SEQUENCE [GENOMIC DNA] OF 1-541</scope>
</reference>
<reference key="3">
    <citation type="journal article" date="1992" name="J. Virol.">
        <title>Identification and expression of rpo19, a vaccinia virus gene encoding a 19-kilodalton DNA-dependent RNA polymerase subunit.</title>
        <authorList>
            <person name="Ahn B.-Y."/>
            <person name="Rosel J."/>
            <person name="Cole N.B."/>
            <person name="Moss B."/>
        </authorList>
    </citation>
    <scope>NUCLEOTIDE SEQUENCE [GENOMIC DNA] OF 526-710</scope>
</reference>
<reference key="4">
    <citation type="journal article" date="1990" name="Proc. Natl. Acad. Sci. U.S.A.">
        <title>Early transcription factor subunits are encoded by vaccinia virus late genes.</title>
        <authorList>
            <person name="Gershon P.D."/>
            <person name="Moss B."/>
        </authorList>
    </citation>
    <scope>PROTEIN SEQUENCE OF 1-15</scope>
    <scope>CHARACTERIZATION</scope>
    <scope>SUBCELLULAR LOCATION</scope>
</reference>
<reference key="5">
    <citation type="journal article" date="1991" name="J. Biol. Chem.">
        <title>A role for ATP hydrolysis in vaccinia virus early gene transcription. Dissociation of the early transcription factor-promoter complex.</title>
        <authorList>
            <person name="Broyles S.S."/>
        </authorList>
    </citation>
    <scope>DNA-BINDING</scope>
    <scope>FUNCTION</scope>
</reference>
<reference key="6">
    <citation type="journal article" date="2009" name="J. Virol.">
        <title>Interaction of the vaccinia virus RNA polymerase-associated 94-kilodalton protein with the early transcription factor.</title>
        <authorList>
            <person name="Yang Z."/>
            <person name="Moss B."/>
        </authorList>
    </citation>
    <scope>IDENTIFICATION IN A COMPLEX WITH RAP94/OPG109 AND THE RNA POLYMERASE</scope>
    <scope>FUNCTION</scope>
</reference>